<sequence>MSVSAFNRRWAAVILEALTRHGVRHVCIAPGSRSTPLTLAAAENPAFIHHTHFDERGLGHLALGLAKVSQQPVAVIVTSGTAVANLYPALIEAGLTGEKLILLTADRPPELIDCGANQAIRQAGMFASHPSQTLSLPRPTQDIPARWLVSTIDNALAMLHAGALHINCPFAEPLYGDMNDTGLVWQQRLGDWWQDEKPWLREARRLESDKQRDWFFWRQKRGVVVAGRMSAEEGKKVAQWAQTLGWPLIGDVLSQTGQPLPCADLWLGNAKAVTELQQAQIVVQLGSSLTGKRLLQWQATCEPEEYWVIDNIEGRLDPAHHRGRRLVAKIADWLELHPAEKRKPWCVEIPRLAELAWQRVVAQRDTFGEAQLAHRIRDYLPEQGQLFVGNSLVVRLIDALSQLPAGYPVYSNRGASGIDGLLSTAAGVQRASAKSTLAIVGDLSALYDLNALALLRQVSAPFVLIVVNNNGGQIFSLLPTPQSKRERFYLMPQNVHFDHAAAMFNLRYHRPENWEELESALAGAWRTPATTVIELVVNDTDGAQTLQQLLAQVSHL</sequence>
<gene>
    <name evidence="1" type="primary">menD</name>
    <name type="ordered locus">STM2309</name>
</gene>
<feature type="chain" id="PRO_0000341825" description="2-succinyl-5-enolpyruvyl-6-hydroxy-3-cyclohexene-1-carboxylate synthase">
    <location>
        <begin position="1"/>
        <end position="556"/>
    </location>
</feature>
<name>MEND_SALTY</name>
<proteinExistence type="inferred from homology"/>
<keyword id="KW-0460">Magnesium</keyword>
<keyword id="KW-0464">Manganese</keyword>
<keyword id="KW-0474">Menaquinone biosynthesis</keyword>
<keyword id="KW-0479">Metal-binding</keyword>
<keyword id="KW-1185">Reference proteome</keyword>
<keyword id="KW-0786">Thiamine pyrophosphate</keyword>
<keyword id="KW-0808">Transferase</keyword>
<evidence type="ECO:0000255" key="1">
    <source>
        <dbReference type="HAMAP-Rule" id="MF_01659"/>
    </source>
</evidence>
<organism>
    <name type="scientific">Salmonella typhimurium (strain LT2 / SGSC1412 / ATCC 700720)</name>
    <dbReference type="NCBI Taxonomy" id="99287"/>
    <lineage>
        <taxon>Bacteria</taxon>
        <taxon>Pseudomonadati</taxon>
        <taxon>Pseudomonadota</taxon>
        <taxon>Gammaproteobacteria</taxon>
        <taxon>Enterobacterales</taxon>
        <taxon>Enterobacteriaceae</taxon>
        <taxon>Salmonella</taxon>
    </lineage>
</organism>
<protein>
    <recommendedName>
        <fullName evidence="1">2-succinyl-5-enolpyruvyl-6-hydroxy-3-cyclohexene-1-carboxylate synthase</fullName>
        <shortName evidence="1">SEPHCHC synthase</shortName>
        <ecNumber evidence="1">2.2.1.9</ecNumber>
    </recommendedName>
    <alternativeName>
        <fullName evidence="1">Menaquinone biosynthesis protein MenD</fullName>
    </alternativeName>
</protein>
<accession>Q8ZNE8</accession>
<comment type="function">
    <text evidence="1">Catalyzes the thiamine diphosphate-dependent decarboxylation of 2-oxoglutarate and the subsequent addition of the resulting succinic semialdehyde-thiamine pyrophosphate anion to isochorismate to yield 2-succinyl-5-enolpyruvyl-6-hydroxy-3-cyclohexene-1-carboxylate (SEPHCHC).</text>
</comment>
<comment type="catalytic activity">
    <reaction evidence="1">
        <text>isochorismate + 2-oxoglutarate + H(+) = 5-enolpyruvoyl-6-hydroxy-2-succinyl-cyclohex-3-ene-1-carboxylate + CO2</text>
        <dbReference type="Rhea" id="RHEA:25593"/>
        <dbReference type="ChEBI" id="CHEBI:15378"/>
        <dbReference type="ChEBI" id="CHEBI:16526"/>
        <dbReference type="ChEBI" id="CHEBI:16810"/>
        <dbReference type="ChEBI" id="CHEBI:29780"/>
        <dbReference type="ChEBI" id="CHEBI:58818"/>
        <dbReference type="EC" id="2.2.1.9"/>
    </reaction>
</comment>
<comment type="cofactor">
    <cofactor evidence="1">
        <name>Mg(2+)</name>
        <dbReference type="ChEBI" id="CHEBI:18420"/>
    </cofactor>
    <cofactor evidence="1">
        <name>Mn(2+)</name>
        <dbReference type="ChEBI" id="CHEBI:29035"/>
    </cofactor>
</comment>
<comment type="cofactor">
    <cofactor evidence="1">
        <name>thiamine diphosphate</name>
        <dbReference type="ChEBI" id="CHEBI:58937"/>
    </cofactor>
    <text evidence="1">Binds 1 thiamine pyrophosphate per subunit.</text>
</comment>
<comment type="pathway">
    <text evidence="1">Quinol/quinone metabolism; 1,4-dihydroxy-2-naphthoate biosynthesis; 1,4-dihydroxy-2-naphthoate from chorismate: step 2/7.</text>
</comment>
<comment type="pathway">
    <text evidence="1">Quinol/quinone metabolism; menaquinone biosynthesis.</text>
</comment>
<comment type="subunit">
    <text evidence="1">Homodimer.</text>
</comment>
<comment type="similarity">
    <text evidence="1">Belongs to the TPP enzyme family. MenD subfamily.</text>
</comment>
<dbReference type="EC" id="2.2.1.9" evidence="1"/>
<dbReference type="EMBL" id="AE006468">
    <property type="protein sequence ID" value="AAL21210.1"/>
    <property type="molecule type" value="Genomic_DNA"/>
</dbReference>
<dbReference type="RefSeq" id="NP_461251.1">
    <property type="nucleotide sequence ID" value="NC_003197.2"/>
</dbReference>
<dbReference type="RefSeq" id="WP_000116392.1">
    <property type="nucleotide sequence ID" value="NC_003197.2"/>
</dbReference>
<dbReference type="SMR" id="Q8ZNE8"/>
<dbReference type="STRING" id="99287.STM2309"/>
<dbReference type="PaxDb" id="99287-STM2309"/>
<dbReference type="GeneID" id="1253831"/>
<dbReference type="KEGG" id="stm:STM2309"/>
<dbReference type="PATRIC" id="fig|99287.12.peg.2444"/>
<dbReference type="HOGENOM" id="CLU_006051_3_0_6"/>
<dbReference type="OMA" id="YDSNALW"/>
<dbReference type="PhylomeDB" id="Q8ZNE8"/>
<dbReference type="BioCyc" id="SENT99287:STM2309-MONOMER"/>
<dbReference type="UniPathway" id="UPA00079"/>
<dbReference type="UniPathway" id="UPA01057">
    <property type="reaction ID" value="UER00164"/>
</dbReference>
<dbReference type="Proteomes" id="UP000001014">
    <property type="component" value="Chromosome"/>
</dbReference>
<dbReference type="GO" id="GO:0070204">
    <property type="term" value="F:2-succinyl-5-enolpyruvyl-6-hydroxy-3-cyclohexene-1-carboxylic-acid synthase activity"/>
    <property type="evidence" value="ECO:0007669"/>
    <property type="project" value="UniProtKB-UniRule"/>
</dbReference>
<dbReference type="GO" id="GO:0000287">
    <property type="term" value="F:magnesium ion binding"/>
    <property type="evidence" value="ECO:0007669"/>
    <property type="project" value="UniProtKB-UniRule"/>
</dbReference>
<dbReference type="GO" id="GO:0030145">
    <property type="term" value="F:manganese ion binding"/>
    <property type="evidence" value="ECO:0007669"/>
    <property type="project" value="UniProtKB-UniRule"/>
</dbReference>
<dbReference type="GO" id="GO:0030976">
    <property type="term" value="F:thiamine pyrophosphate binding"/>
    <property type="evidence" value="ECO:0007669"/>
    <property type="project" value="UniProtKB-UniRule"/>
</dbReference>
<dbReference type="GO" id="GO:0009234">
    <property type="term" value="P:menaquinone biosynthetic process"/>
    <property type="evidence" value="ECO:0007669"/>
    <property type="project" value="UniProtKB-UniRule"/>
</dbReference>
<dbReference type="CDD" id="cd07037">
    <property type="entry name" value="TPP_PYR_MenD"/>
    <property type="match status" value="1"/>
</dbReference>
<dbReference type="CDD" id="cd02009">
    <property type="entry name" value="TPP_SHCHC_synthase"/>
    <property type="match status" value="1"/>
</dbReference>
<dbReference type="FunFam" id="3.40.50.1220:FF:000010">
    <property type="entry name" value="2-succinyl-5-enolpyruvyl-6-hydroxy-3-cyclohexene-1-carboxylate synthase"/>
    <property type="match status" value="1"/>
</dbReference>
<dbReference type="FunFam" id="3.40.50.970:FF:000029">
    <property type="entry name" value="2-succinyl-5-enolpyruvyl-6-hydroxy-3-cyclohexene-1-carboxylate synthase"/>
    <property type="match status" value="1"/>
</dbReference>
<dbReference type="Gene3D" id="3.40.50.970">
    <property type="match status" value="2"/>
</dbReference>
<dbReference type="Gene3D" id="3.40.50.1220">
    <property type="entry name" value="TPP-binding domain"/>
    <property type="match status" value="1"/>
</dbReference>
<dbReference type="HAMAP" id="MF_01659">
    <property type="entry name" value="MenD"/>
    <property type="match status" value="1"/>
</dbReference>
<dbReference type="InterPro" id="IPR004433">
    <property type="entry name" value="MenaQ_synth_MenD"/>
</dbReference>
<dbReference type="InterPro" id="IPR032264">
    <property type="entry name" value="MenD_middle"/>
</dbReference>
<dbReference type="InterPro" id="IPR029061">
    <property type="entry name" value="THDP-binding"/>
</dbReference>
<dbReference type="InterPro" id="IPR012001">
    <property type="entry name" value="Thiamin_PyroP_enz_TPP-bd_dom"/>
</dbReference>
<dbReference type="InterPro" id="IPR011766">
    <property type="entry name" value="TPP_enzyme_TPP-bd"/>
</dbReference>
<dbReference type="NCBIfam" id="TIGR00173">
    <property type="entry name" value="menD"/>
    <property type="match status" value="1"/>
</dbReference>
<dbReference type="PANTHER" id="PTHR42916">
    <property type="entry name" value="2-SUCCINYL-5-ENOLPYRUVYL-6-HYDROXY-3-CYCLOHEXENE-1-CARBOXYLATE SYNTHASE"/>
    <property type="match status" value="1"/>
</dbReference>
<dbReference type="PANTHER" id="PTHR42916:SF1">
    <property type="entry name" value="PROTEIN PHYLLO, CHLOROPLASTIC"/>
    <property type="match status" value="1"/>
</dbReference>
<dbReference type="Pfam" id="PF02775">
    <property type="entry name" value="TPP_enzyme_C"/>
    <property type="match status" value="1"/>
</dbReference>
<dbReference type="Pfam" id="PF16582">
    <property type="entry name" value="TPP_enzyme_M_2"/>
    <property type="match status" value="1"/>
</dbReference>
<dbReference type="Pfam" id="PF02776">
    <property type="entry name" value="TPP_enzyme_N"/>
    <property type="match status" value="1"/>
</dbReference>
<dbReference type="PIRSF" id="PIRSF004983">
    <property type="entry name" value="MenD"/>
    <property type="match status" value="1"/>
</dbReference>
<dbReference type="SUPFAM" id="SSF52518">
    <property type="entry name" value="Thiamin diphosphate-binding fold (THDP-binding)"/>
    <property type="match status" value="2"/>
</dbReference>
<reference key="1">
    <citation type="journal article" date="2001" name="Nature">
        <title>Complete genome sequence of Salmonella enterica serovar Typhimurium LT2.</title>
        <authorList>
            <person name="McClelland M."/>
            <person name="Sanderson K.E."/>
            <person name="Spieth J."/>
            <person name="Clifton S.W."/>
            <person name="Latreille P."/>
            <person name="Courtney L."/>
            <person name="Porwollik S."/>
            <person name="Ali J."/>
            <person name="Dante M."/>
            <person name="Du F."/>
            <person name="Hou S."/>
            <person name="Layman D."/>
            <person name="Leonard S."/>
            <person name="Nguyen C."/>
            <person name="Scott K."/>
            <person name="Holmes A."/>
            <person name="Grewal N."/>
            <person name="Mulvaney E."/>
            <person name="Ryan E."/>
            <person name="Sun H."/>
            <person name="Florea L."/>
            <person name="Miller W."/>
            <person name="Stoneking T."/>
            <person name="Nhan M."/>
            <person name="Waterston R."/>
            <person name="Wilson R.K."/>
        </authorList>
    </citation>
    <scope>NUCLEOTIDE SEQUENCE [LARGE SCALE GENOMIC DNA]</scope>
    <source>
        <strain>LT2 / SGSC1412 / ATCC 700720</strain>
    </source>
</reference>